<feature type="chain" id="PRO_0000162024" description="Uncharacterized RNA methyltransferase gbs0613">
    <location>
        <begin position="1"/>
        <end position="451"/>
    </location>
</feature>
<feature type="domain" description="TRAM" evidence="1">
    <location>
        <begin position="1"/>
        <end position="59"/>
    </location>
</feature>
<feature type="active site" description="Nucleophile" evidence="2">
    <location>
        <position position="408"/>
    </location>
</feature>
<feature type="binding site" evidence="2">
    <location>
        <position position="283"/>
    </location>
    <ligand>
        <name>S-adenosyl-L-methionine</name>
        <dbReference type="ChEBI" id="CHEBI:59789"/>
    </ligand>
</feature>
<feature type="binding site" evidence="2">
    <location>
        <position position="312"/>
    </location>
    <ligand>
        <name>S-adenosyl-L-methionine</name>
        <dbReference type="ChEBI" id="CHEBI:59789"/>
    </ligand>
</feature>
<feature type="binding site" evidence="2">
    <location>
        <position position="333"/>
    </location>
    <ligand>
        <name>S-adenosyl-L-methionine</name>
        <dbReference type="ChEBI" id="CHEBI:59789"/>
    </ligand>
</feature>
<feature type="binding site" evidence="2">
    <location>
        <position position="381"/>
    </location>
    <ligand>
        <name>S-adenosyl-L-methionine</name>
        <dbReference type="ChEBI" id="CHEBI:59789"/>
    </ligand>
</feature>
<comment type="similarity">
    <text evidence="2">Belongs to the class I-like SAM-binding methyltransferase superfamily. RNA M5U methyltransferase family.</text>
</comment>
<gene>
    <name type="ordered locus">gbs0613</name>
</gene>
<organism>
    <name type="scientific">Streptococcus agalactiae serotype III (strain NEM316)</name>
    <dbReference type="NCBI Taxonomy" id="211110"/>
    <lineage>
        <taxon>Bacteria</taxon>
        <taxon>Bacillati</taxon>
        <taxon>Bacillota</taxon>
        <taxon>Bacilli</taxon>
        <taxon>Lactobacillales</taxon>
        <taxon>Streptococcaceae</taxon>
        <taxon>Streptococcus</taxon>
    </lineage>
</organism>
<sequence>MLHKNDIIETEISDISHEGMGIAKVDGFVFFVENALPGEIIKMRVLKLRKRIGYGKVEEYLTTSPHRNEGLDYTYLRTGIADLGHLTYEQQLLFKQKQVADNLYKIAHISDVLVEPTLGMTIPLAYRNKAQVPVRRVDGQLETGFFRKNSHTLVSIEDYLIQEKEIDALINFTRDLLRKFDVKPYDEEQQSGLIRNLVVRRGHYTGQLMLVLVTTRPKIFRIDQMIEKLVSAFPSVVSIMQNINDRNSNVIFGKEFRTLYGSDTIEDQMLGNTYAISAQSFYQVNTEMAEKLYQKAIDFSDLNSEDIVIDAYSGIGTIGLSVAKQVKHVYGVEVVEKAVSDAKENATRNGITNSTYVADSAENAMAKWLKEGIKPTVIMVDPPRKGLTESFVYSAAQTKADKITYISCNSATMARDIKLFEELGYHLVKIQPVDLFPMTHHVECVALLVKA</sequence>
<name>Y613_STRA3</name>
<proteinExistence type="inferred from homology"/>
<keyword id="KW-0489">Methyltransferase</keyword>
<keyword id="KW-0949">S-adenosyl-L-methionine</keyword>
<keyword id="KW-0808">Transferase</keyword>
<dbReference type="EC" id="2.1.1.-"/>
<dbReference type="EMBL" id="AL766846">
    <property type="protein sequence ID" value="CAD46257.1"/>
    <property type="molecule type" value="Genomic_DNA"/>
</dbReference>
<dbReference type="SMR" id="Q8E6F5"/>
<dbReference type="KEGG" id="san:gbs0613"/>
<dbReference type="eggNOG" id="COG2265">
    <property type="taxonomic scope" value="Bacteria"/>
</dbReference>
<dbReference type="HOGENOM" id="CLU_014689_7_0_9"/>
<dbReference type="Proteomes" id="UP000000823">
    <property type="component" value="Chromosome"/>
</dbReference>
<dbReference type="GO" id="GO:0070041">
    <property type="term" value="F:rRNA (uridine-C5-)-methyltransferase activity"/>
    <property type="evidence" value="ECO:0007669"/>
    <property type="project" value="TreeGrafter"/>
</dbReference>
<dbReference type="GO" id="GO:0070475">
    <property type="term" value="P:rRNA base methylation"/>
    <property type="evidence" value="ECO:0007669"/>
    <property type="project" value="TreeGrafter"/>
</dbReference>
<dbReference type="CDD" id="cd02440">
    <property type="entry name" value="AdoMet_MTases"/>
    <property type="match status" value="1"/>
</dbReference>
<dbReference type="FunFam" id="3.40.50.150:FF:000009">
    <property type="entry name" value="23S rRNA (Uracil(1939)-C(5))-methyltransferase RlmD"/>
    <property type="match status" value="1"/>
</dbReference>
<dbReference type="FunFam" id="2.40.50.1070:FF:000003">
    <property type="entry name" value="23S rRNA (Uracil-5-)-methyltransferase RumA"/>
    <property type="match status" value="1"/>
</dbReference>
<dbReference type="Gene3D" id="2.40.50.1070">
    <property type="match status" value="1"/>
</dbReference>
<dbReference type="Gene3D" id="2.40.50.140">
    <property type="entry name" value="Nucleic acid-binding proteins"/>
    <property type="match status" value="1"/>
</dbReference>
<dbReference type="Gene3D" id="3.40.50.150">
    <property type="entry name" value="Vaccinia Virus protein VP39"/>
    <property type="match status" value="1"/>
</dbReference>
<dbReference type="InterPro" id="IPR030390">
    <property type="entry name" value="MeTrfase_TrmA_AS"/>
</dbReference>
<dbReference type="InterPro" id="IPR030391">
    <property type="entry name" value="MeTrfase_TrmA_CS"/>
</dbReference>
<dbReference type="InterPro" id="IPR012340">
    <property type="entry name" value="NA-bd_OB-fold"/>
</dbReference>
<dbReference type="InterPro" id="IPR029063">
    <property type="entry name" value="SAM-dependent_MTases_sf"/>
</dbReference>
<dbReference type="InterPro" id="IPR002792">
    <property type="entry name" value="TRAM_dom"/>
</dbReference>
<dbReference type="InterPro" id="IPR010280">
    <property type="entry name" value="U5_MeTrfase_fam"/>
</dbReference>
<dbReference type="NCBIfam" id="TIGR00479">
    <property type="entry name" value="rumA"/>
    <property type="match status" value="1"/>
</dbReference>
<dbReference type="PANTHER" id="PTHR11061">
    <property type="entry name" value="RNA M5U METHYLTRANSFERASE"/>
    <property type="match status" value="1"/>
</dbReference>
<dbReference type="PANTHER" id="PTHR11061:SF30">
    <property type="entry name" value="TRNA (URACIL(54)-C(5))-METHYLTRANSFERASE"/>
    <property type="match status" value="1"/>
</dbReference>
<dbReference type="Pfam" id="PF01938">
    <property type="entry name" value="TRAM"/>
    <property type="match status" value="1"/>
</dbReference>
<dbReference type="Pfam" id="PF05958">
    <property type="entry name" value="tRNA_U5-meth_tr"/>
    <property type="match status" value="1"/>
</dbReference>
<dbReference type="SUPFAM" id="SSF50249">
    <property type="entry name" value="Nucleic acid-binding proteins"/>
    <property type="match status" value="1"/>
</dbReference>
<dbReference type="SUPFAM" id="SSF53335">
    <property type="entry name" value="S-adenosyl-L-methionine-dependent methyltransferases"/>
    <property type="match status" value="1"/>
</dbReference>
<dbReference type="PROSITE" id="PS51687">
    <property type="entry name" value="SAM_MT_RNA_M5U"/>
    <property type="match status" value="1"/>
</dbReference>
<dbReference type="PROSITE" id="PS50926">
    <property type="entry name" value="TRAM"/>
    <property type="match status" value="1"/>
</dbReference>
<dbReference type="PROSITE" id="PS01230">
    <property type="entry name" value="TRMA_1"/>
    <property type="match status" value="1"/>
</dbReference>
<dbReference type="PROSITE" id="PS01231">
    <property type="entry name" value="TRMA_2"/>
    <property type="match status" value="1"/>
</dbReference>
<reference key="1">
    <citation type="journal article" date="2002" name="Mol. Microbiol.">
        <title>Genome sequence of Streptococcus agalactiae, a pathogen causing invasive neonatal disease.</title>
        <authorList>
            <person name="Glaser P."/>
            <person name="Rusniok C."/>
            <person name="Buchrieser C."/>
            <person name="Chevalier F."/>
            <person name="Frangeul L."/>
            <person name="Msadek T."/>
            <person name="Zouine M."/>
            <person name="Couve E."/>
            <person name="Lalioui L."/>
            <person name="Poyart C."/>
            <person name="Trieu-Cuot P."/>
            <person name="Kunst F."/>
        </authorList>
    </citation>
    <scope>NUCLEOTIDE SEQUENCE [LARGE SCALE GENOMIC DNA]</scope>
    <source>
        <strain>NEM316</strain>
    </source>
</reference>
<protein>
    <recommendedName>
        <fullName>Uncharacterized RNA methyltransferase gbs0613</fullName>
        <ecNumber>2.1.1.-</ecNumber>
    </recommendedName>
</protein>
<evidence type="ECO:0000255" key="1">
    <source>
        <dbReference type="PROSITE-ProRule" id="PRU00208"/>
    </source>
</evidence>
<evidence type="ECO:0000255" key="2">
    <source>
        <dbReference type="PROSITE-ProRule" id="PRU01024"/>
    </source>
</evidence>
<accession>Q8E6F5</accession>